<reference key="1">
    <citation type="journal article" date="2002" name="Environ. Microbiol.">
        <title>Complete genome sequence and comparative analysis of the metabolically versatile Pseudomonas putida KT2440.</title>
        <authorList>
            <person name="Nelson K.E."/>
            <person name="Weinel C."/>
            <person name="Paulsen I.T."/>
            <person name="Dodson R.J."/>
            <person name="Hilbert H."/>
            <person name="Martins dos Santos V.A.P."/>
            <person name="Fouts D.E."/>
            <person name="Gill S.R."/>
            <person name="Pop M."/>
            <person name="Holmes M."/>
            <person name="Brinkac L.M."/>
            <person name="Beanan M.J."/>
            <person name="DeBoy R.T."/>
            <person name="Daugherty S.C."/>
            <person name="Kolonay J.F."/>
            <person name="Madupu R."/>
            <person name="Nelson W.C."/>
            <person name="White O."/>
            <person name="Peterson J.D."/>
            <person name="Khouri H.M."/>
            <person name="Hance I."/>
            <person name="Chris Lee P."/>
            <person name="Holtzapple E.K."/>
            <person name="Scanlan D."/>
            <person name="Tran K."/>
            <person name="Moazzez A."/>
            <person name="Utterback T.R."/>
            <person name="Rizzo M."/>
            <person name="Lee K."/>
            <person name="Kosack D."/>
            <person name="Moestl D."/>
            <person name="Wedler H."/>
            <person name="Lauber J."/>
            <person name="Stjepandic D."/>
            <person name="Hoheisel J."/>
            <person name="Straetz M."/>
            <person name="Heim S."/>
            <person name="Kiewitz C."/>
            <person name="Eisen J.A."/>
            <person name="Timmis K.N."/>
            <person name="Duesterhoeft A."/>
            <person name="Tuemmler B."/>
            <person name="Fraser C.M."/>
        </authorList>
    </citation>
    <scope>NUCLEOTIDE SEQUENCE [LARGE SCALE GENOMIC DNA]</scope>
    <source>
        <strain>ATCC 47054 / DSM 6125 / CFBP 8728 / NCIMB 11950 / KT2440</strain>
    </source>
</reference>
<name>RS17_PSEPK</name>
<comment type="function">
    <text evidence="1">One of the primary rRNA binding proteins, it binds specifically to the 5'-end of 16S ribosomal RNA.</text>
</comment>
<comment type="subunit">
    <text evidence="1">Part of the 30S ribosomal subunit.</text>
</comment>
<comment type="similarity">
    <text evidence="1">Belongs to the universal ribosomal protein uS17 family.</text>
</comment>
<dbReference type="EMBL" id="AE015451">
    <property type="protein sequence ID" value="AAN66093.1"/>
    <property type="molecule type" value="Genomic_DNA"/>
</dbReference>
<dbReference type="RefSeq" id="NP_742629.1">
    <property type="nucleotide sequence ID" value="NC_002947.4"/>
</dbReference>
<dbReference type="RefSeq" id="WP_003255478.1">
    <property type="nucleotide sequence ID" value="NZ_CP169744.1"/>
</dbReference>
<dbReference type="SMR" id="Q88QM6"/>
<dbReference type="STRING" id="160488.PP_0463"/>
<dbReference type="PaxDb" id="160488-PP_0463"/>
<dbReference type="GeneID" id="97165988"/>
<dbReference type="KEGG" id="ppu:PP_0463"/>
<dbReference type="PATRIC" id="fig|160488.4.peg.495"/>
<dbReference type="eggNOG" id="COG0186">
    <property type="taxonomic scope" value="Bacteria"/>
</dbReference>
<dbReference type="HOGENOM" id="CLU_073626_1_1_6"/>
<dbReference type="OrthoDB" id="9811714at2"/>
<dbReference type="PhylomeDB" id="Q88QM6"/>
<dbReference type="BioCyc" id="PPUT160488:G1G01-509-MONOMER"/>
<dbReference type="Proteomes" id="UP000000556">
    <property type="component" value="Chromosome"/>
</dbReference>
<dbReference type="GO" id="GO:0022627">
    <property type="term" value="C:cytosolic small ribosomal subunit"/>
    <property type="evidence" value="ECO:0007669"/>
    <property type="project" value="TreeGrafter"/>
</dbReference>
<dbReference type="GO" id="GO:0019843">
    <property type="term" value="F:rRNA binding"/>
    <property type="evidence" value="ECO:0007669"/>
    <property type="project" value="UniProtKB-UniRule"/>
</dbReference>
<dbReference type="GO" id="GO:0003735">
    <property type="term" value="F:structural constituent of ribosome"/>
    <property type="evidence" value="ECO:0007669"/>
    <property type="project" value="InterPro"/>
</dbReference>
<dbReference type="GO" id="GO:0006412">
    <property type="term" value="P:translation"/>
    <property type="evidence" value="ECO:0007669"/>
    <property type="project" value="UniProtKB-UniRule"/>
</dbReference>
<dbReference type="CDD" id="cd00364">
    <property type="entry name" value="Ribosomal_uS17"/>
    <property type="match status" value="1"/>
</dbReference>
<dbReference type="FunFam" id="2.40.50.140:FF:000014">
    <property type="entry name" value="30S ribosomal protein S17"/>
    <property type="match status" value="1"/>
</dbReference>
<dbReference type="Gene3D" id="2.40.50.140">
    <property type="entry name" value="Nucleic acid-binding proteins"/>
    <property type="match status" value="1"/>
</dbReference>
<dbReference type="HAMAP" id="MF_01345_B">
    <property type="entry name" value="Ribosomal_uS17_B"/>
    <property type="match status" value="1"/>
</dbReference>
<dbReference type="InterPro" id="IPR012340">
    <property type="entry name" value="NA-bd_OB-fold"/>
</dbReference>
<dbReference type="InterPro" id="IPR000266">
    <property type="entry name" value="Ribosomal_uS17"/>
</dbReference>
<dbReference type="InterPro" id="IPR019984">
    <property type="entry name" value="Ribosomal_uS17_bact/chlr"/>
</dbReference>
<dbReference type="NCBIfam" id="NF004123">
    <property type="entry name" value="PRK05610.1"/>
    <property type="match status" value="1"/>
</dbReference>
<dbReference type="NCBIfam" id="TIGR03635">
    <property type="entry name" value="uS17_bact"/>
    <property type="match status" value="1"/>
</dbReference>
<dbReference type="PANTHER" id="PTHR10744">
    <property type="entry name" value="40S RIBOSOMAL PROTEIN S11 FAMILY MEMBER"/>
    <property type="match status" value="1"/>
</dbReference>
<dbReference type="PANTHER" id="PTHR10744:SF1">
    <property type="entry name" value="SMALL RIBOSOMAL SUBUNIT PROTEIN US17M"/>
    <property type="match status" value="1"/>
</dbReference>
<dbReference type="Pfam" id="PF00366">
    <property type="entry name" value="Ribosomal_S17"/>
    <property type="match status" value="1"/>
</dbReference>
<dbReference type="PRINTS" id="PR00973">
    <property type="entry name" value="RIBOSOMALS17"/>
</dbReference>
<dbReference type="SUPFAM" id="SSF50249">
    <property type="entry name" value="Nucleic acid-binding proteins"/>
    <property type="match status" value="1"/>
</dbReference>
<sequence>MAEAEKTVRTLTGRVVSDKMDKTITVLIERRVKHPIYGKYVKRSTKLHAHDEANQCKIGDKVSIRETRPLAKTKSWALVEVLERAVEV</sequence>
<keyword id="KW-1185">Reference proteome</keyword>
<keyword id="KW-0687">Ribonucleoprotein</keyword>
<keyword id="KW-0689">Ribosomal protein</keyword>
<keyword id="KW-0694">RNA-binding</keyword>
<keyword id="KW-0699">rRNA-binding</keyword>
<accession>Q88QM6</accession>
<feature type="chain" id="PRO_0000233545" description="Small ribosomal subunit protein uS17">
    <location>
        <begin position="1"/>
        <end position="88"/>
    </location>
</feature>
<protein>
    <recommendedName>
        <fullName evidence="1">Small ribosomal subunit protein uS17</fullName>
    </recommendedName>
    <alternativeName>
        <fullName evidence="2">30S ribosomal protein S17</fullName>
    </alternativeName>
</protein>
<evidence type="ECO:0000255" key="1">
    <source>
        <dbReference type="HAMAP-Rule" id="MF_01345"/>
    </source>
</evidence>
<evidence type="ECO:0000305" key="2"/>
<proteinExistence type="inferred from homology"/>
<gene>
    <name evidence="1" type="primary">rpsQ</name>
    <name type="ordered locus">PP_0463</name>
</gene>
<organism>
    <name type="scientific">Pseudomonas putida (strain ATCC 47054 / DSM 6125 / CFBP 8728 / NCIMB 11950 / KT2440)</name>
    <dbReference type="NCBI Taxonomy" id="160488"/>
    <lineage>
        <taxon>Bacteria</taxon>
        <taxon>Pseudomonadati</taxon>
        <taxon>Pseudomonadota</taxon>
        <taxon>Gammaproteobacteria</taxon>
        <taxon>Pseudomonadales</taxon>
        <taxon>Pseudomonadaceae</taxon>
        <taxon>Pseudomonas</taxon>
    </lineage>
</organism>